<gene>
    <name evidence="1" type="primary">rsmG</name>
    <name type="ordered locus">BRADO0194</name>
</gene>
<accession>A4YJT3</accession>
<dbReference type="EC" id="2.1.1.170" evidence="1"/>
<dbReference type="EMBL" id="CU234118">
    <property type="protein sequence ID" value="CAL74159.1"/>
    <property type="molecule type" value="Genomic_DNA"/>
</dbReference>
<dbReference type="RefSeq" id="WP_011923449.1">
    <property type="nucleotide sequence ID" value="NC_009445.1"/>
</dbReference>
<dbReference type="SMR" id="A4YJT3"/>
<dbReference type="STRING" id="114615.BRADO0194"/>
<dbReference type="KEGG" id="bra:BRADO0194"/>
<dbReference type="eggNOG" id="COG0357">
    <property type="taxonomic scope" value="Bacteria"/>
</dbReference>
<dbReference type="HOGENOM" id="CLU_065341_1_0_5"/>
<dbReference type="OrthoDB" id="9808773at2"/>
<dbReference type="Proteomes" id="UP000001994">
    <property type="component" value="Chromosome"/>
</dbReference>
<dbReference type="GO" id="GO:0005829">
    <property type="term" value="C:cytosol"/>
    <property type="evidence" value="ECO:0007669"/>
    <property type="project" value="TreeGrafter"/>
</dbReference>
<dbReference type="GO" id="GO:0070043">
    <property type="term" value="F:rRNA (guanine-N7-)-methyltransferase activity"/>
    <property type="evidence" value="ECO:0007669"/>
    <property type="project" value="UniProtKB-UniRule"/>
</dbReference>
<dbReference type="CDD" id="cd02440">
    <property type="entry name" value="AdoMet_MTases"/>
    <property type="match status" value="1"/>
</dbReference>
<dbReference type="Gene3D" id="3.40.50.150">
    <property type="entry name" value="Vaccinia Virus protein VP39"/>
    <property type="match status" value="1"/>
</dbReference>
<dbReference type="HAMAP" id="MF_00074">
    <property type="entry name" value="16SrRNA_methyltr_G"/>
    <property type="match status" value="1"/>
</dbReference>
<dbReference type="InterPro" id="IPR003682">
    <property type="entry name" value="rRNA_ssu_MeTfrase_G"/>
</dbReference>
<dbReference type="InterPro" id="IPR029063">
    <property type="entry name" value="SAM-dependent_MTases_sf"/>
</dbReference>
<dbReference type="NCBIfam" id="TIGR00138">
    <property type="entry name" value="rsmG_gidB"/>
    <property type="match status" value="1"/>
</dbReference>
<dbReference type="PANTHER" id="PTHR31760">
    <property type="entry name" value="S-ADENOSYL-L-METHIONINE-DEPENDENT METHYLTRANSFERASES SUPERFAMILY PROTEIN"/>
    <property type="match status" value="1"/>
</dbReference>
<dbReference type="PANTHER" id="PTHR31760:SF0">
    <property type="entry name" value="S-ADENOSYL-L-METHIONINE-DEPENDENT METHYLTRANSFERASES SUPERFAMILY PROTEIN"/>
    <property type="match status" value="1"/>
</dbReference>
<dbReference type="Pfam" id="PF02527">
    <property type="entry name" value="GidB"/>
    <property type="match status" value="1"/>
</dbReference>
<dbReference type="PIRSF" id="PIRSF003078">
    <property type="entry name" value="GidB"/>
    <property type="match status" value="1"/>
</dbReference>
<dbReference type="SUPFAM" id="SSF53335">
    <property type="entry name" value="S-adenosyl-L-methionine-dependent methyltransferases"/>
    <property type="match status" value="1"/>
</dbReference>
<keyword id="KW-0963">Cytoplasm</keyword>
<keyword id="KW-0489">Methyltransferase</keyword>
<keyword id="KW-1185">Reference proteome</keyword>
<keyword id="KW-0698">rRNA processing</keyword>
<keyword id="KW-0949">S-adenosyl-L-methionine</keyword>
<keyword id="KW-0808">Transferase</keyword>
<name>RSMG_BRASO</name>
<feature type="chain" id="PRO_0000335314" description="Ribosomal RNA small subunit methyltransferase G">
    <location>
        <begin position="1"/>
        <end position="222"/>
    </location>
</feature>
<feature type="binding site" evidence="1">
    <location>
        <position position="84"/>
    </location>
    <ligand>
        <name>S-adenosyl-L-methionine</name>
        <dbReference type="ChEBI" id="CHEBI:59789"/>
    </ligand>
</feature>
<feature type="binding site" evidence="1">
    <location>
        <position position="89"/>
    </location>
    <ligand>
        <name>S-adenosyl-L-methionine</name>
        <dbReference type="ChEBI" id="CHEBI:59789"/>
    </ligand>
</feature>
<feature type="binding site" evidence="1">
    <location>
        <begin position="141"/>
        <end position="142"/>
    </location>
    <ligand>
        <name>S-adenosyl-L-methionine</name>
        <dbReference type="ChEBI" id="CHEBI:59789"/>
    </ligand>
</feature>
<feature type="binding site" evidence="1">
    <location>
        <position position="154"/>
    </location>
    <ligand>
        <name>S-adenosyl-L-methionine</name>
        <dbReference type="ChEBI" id="CHEBI:59789"/>
    </ligand>
</feature>
<protein>
    <recommendedName>
        <fullName evidence="1">Ribosomal RNA small subunit methyltransferase G</fullName>
        <ecNumber evidence="1">2.1.1.170</ecNumber>
    </recommendedName>
    <alternativeName>
        <fullName evidence="1">16S rRNA 7-methylguanosine methyltransferase</fullName>
        <shortName evidence="1">16S rRNA m7G methyltransferase</shortName>
    </alternativeName>
</protein>
<reference key="1">
    <citation type="journal article" date="2007" name="Science">
        <title>Legumes symbioses: absence of nod genes in photosynthetic bradyrhizobia.</title>
        <authorList>
            <person name="Giraud E."/>
            <person name="Moulin L."/>
            <person name="Vallenet D."/>
            <person name="Barbe V."/>
            <person name="Cytryn E."/>
            <person name="Avarre J.-C."/>
            <person name="Jaubert M."/>
            <person name="Simon D."/>
            <person name="Cartieaux F."/>
            <person name="Prin Y."/>
            <person name="Bena G."/>
            <person name="Hannibal L."/>
            <person name="Fardoux J."/>
            <person name="Kojadinovic M."/>
            <person name="Vuillet L."/>
            <person name="Lajus A."/>
            <person name="Cruveiller S."/>
            <person name="Rouy Z."/>
            <person name="Mangenot S."/>
            <person name="Segurens B."/>
            <person name="Dossat C."/>
            <person name="Franck W.L."/>
            <person name="Chang W.-S."/>
            <person name="Saunders E."/>
            <person name="Bruce D."/>
            <person name="Richardson P."/>
            <person name="Normand P."/>
            <person name="Dreyfus B."/>
            <person name="Pignol D."/>
            <person name="Stacey G."/>
            <person name="Emerich D."/>
            <person name="Vermeglio A."/>
            <person name="Medigue C."/>
            <person name="Sadowsky M."/>
        </authorList>
    </citation>
    <scope>NUCLEOTIDE SEQUENCE [LARGE SCALE GENOMIC DNA]</scope>
    <source>
        <strain>ORS 278</strain>
    </source>
</reference>
<comment type="function">
    <text evidence="1">Specifically methylates the N7 position of guanine in position 527 of 16S rRNA.</text>
</comment>
<comment type="catalytic activity">
    <reaction evidence="1">
        <text>guanosine(527) in 16S rRNA + S-adenosyl-L-methionine = N(7)-methylguanosine(527) in 16S rRNA + S-adenosyl-L-homocysteine</text>
        <dbReference type="Rhea" id="RHEA:42732"/>
        <dbReference type="Rhea" id="RHEA-COMP:10209"/>
        <dbReference type="Rhea" id="RHEA-COMP:10210"/>
        <dbReference type="ChEBI" id="CHEBI:57856"/>
        <dbReference type="ChEBI" id="CHEBI:59789"/>
        <dbReference type="ChEBI" id="CHEBI:74269"/>
        <dbReference type="ChEBI" id="CHEBI:74480"/>
        <dbReference type="EC" id="2.1.1.170"/>
    </reaction>
</comment>
<comment type="subcellular location">
    <subcellularLocation>
        <location evidence="1">Cytoplasm</location>
    </subcellularLocation>
</comment>
<comment type="similarity">
    <text evidence="1">Belongs to the methyltransferase superfamily. RNA methyltransferase RsmG family.</text>
</comment>
<proteinExistence type="inferred from homology"/>
<organism>
    <name type="scientific">Bradyrhizobium sp. (strain ORS 278)</name>
    <dbReference type="NCBI Taxonomy" id="114615"/>
    <lineage>
        <taxon>Bacteria</taxon>
        <taxon>Pseudomonadati</taxon>
        <taxon>Pseudomonadota</taxon>
        <taxon>Alphaproteobacteria</taxon>
        <taxon>Hyphomicrobiales</taxon>
        <taxon>Nitrobacteraceae</taxon>
        <taxon>Bradyrhizobium</taxon>
    </lineage>
</organism>
<sequence length="222" mass="24090">MKPTSSAAARNELASDKAAALALTPVSRETERRLDRYIALLLEWQAKTNLVAPSTLPHLWTRHISDSLQLLDLAPEASFWVDLGSGGGFPGVVLACALAERPGAKVHLVERIAKKAAFLREAIRVTGSPGTVHLSEIGDIVEKWSGRVDCVTARALAPLHQLVGFAEPLVKKGAKALFLKGQDVDAELTESTKYWKIEPKLHSSRTGGQGWIVAIDCIERRS</sequence>
<evidence type="ECO:0000255" key="1">
    <source>
        <dbReference type="HAMAP-Rule" id="MF_00074"/>
    </source>
</evidence>